<organism>
    <name type="scientific">Pseudomonas fluorescens (strain ATCC BAA-477 / NRRL B-23932 / Pf-5)</name>
    <dbReference type="NCBI Taxonomy" id="220664"/>
    <lineage>
        <taxon>Bacteria</taxon>
        <taxon>Pseudomonadati</taxon>
        <taxon>Pseudomonadota</taxon>
        <taxon>Gammaproteobacteria</taxon>
        <taxon>Pseudomonadales</taxon>
        <taxon>Pseudomonadaceae</taxon>
        <taxon>Pseudomonas</taxon>
    </lineage>
</organism>
<protein>
    <recommendedName>
        <fullName evidence="1">4-hydroxy-tetrahydrodipicolinate reductase</fullName>
        <shortName evidence="1">HTPA reductase</shortName>
        <ecNumber evidence="1">1.17.1.8</ecNumber>
    </recommendedName>
</protein>
<name>DAPB_PSEF5</name>
<reference key="1">
    <citation type="journal article" date="2005" name="Nat. Biotechnol.">
        <title>Complete genome sequence of the plant commensal Pseudomonas fluorescens Pf-5.</title>
        <authorList>
            <person name="Paulsen I.T."/>
            <person name="Press C.M."/>
            <person name="Ravel J."/>
            <person name="Kobayashi D.Y."/>
            <person name="Myers G.S.A."/>
            <person name="Mavrodi D.V."/>
            <person name="DeBoy R.T."/>
            <person name="Seshadri R."/>
            <person name="Ren Q."/>
            <person name="Madupu R."/>
            <person name="Dodson R.J."/>
            <person name="Durkin A.S."/>
            <person name="Brinkac L.M."/>
            <person name="Daugherty S.C."/>
            <person name="Sullivan S.A."/>
            <person name="Rosovitz M.J."/>
            <person name="Gwinn M.L."/>
            <person name="Zhou L."/>
            <person name="Schneider D.J."/>
            <person name="Cartinhour S.W."/>
            <person name="Nelson W.C."/>
            <person name="Weidman J."/>
            <person name="Watkins K."/>
            <person name="Tran K."/>
            <person name="Khouri H."/>
            <person name="Pierson E.A."/>
            <person name="Pierson L.S. III"/>
            <person name="Thomashow L.S."/>
            <person name="Loper J.E."/>
        </authorList>
    </citation>
    <scope>NUCLEOTIDE SEQUENCE [LARGE SCALE GENOMIC DNA]</scope>
    <source>
        <strain>ATCC BAA-477 / NRRL B-23932 / Pf-5</strain>
    </source>
</reference>
<comment type="function">
    <text evidence="1">Catalyzes the conversion of 4-hydroxy-tetrahydrodipicolinate (HTPA) to tetrahydrodipicolinate.</text>
</comment>
<comment type="catalytic activity">
    <reaction evidence="1">
        <text>(S)-2,3,4,5-tetrahydrodipicolinate + NAD(+) + H2O = (2S,4S)-4-hydroxy-2,3,4,5-tetrahydrodipicolinate + NADH + H(+)</text>
        <dbReference type="Rhea" id="RHEA:35323"/>
        <dbReference type="ChEBI" id="CHEBI:15377"/>
        <dbReference type="ChEBI" id="CHEBI:15378"/>
        <dbReference type="ChEBI" id="CHEBI:16845"/>
        <dbReference type="ChEBI" id="CHEBI:57540"/>
        <dbReference type="ChEBI" id="CHEBI:57945"/>
        <dbReference type="ChEBI" id="CHEBI:67139"/>
        <dbReference type="EC" id="1.17.1.8"/>
    </reaction>
</comment>
<comment type="catalytic activity">
    <reaction evidence="1">
        <text>(S)-2,3,4,5-tetrahydrodipicolinate + NADP(+) + H2O = (2S,4S)-4-hydroxy-2,3,4,5-tetrahydrodipicolinate + NADPH + H(+)</text>
        <dbReference type="Rhea" id="RHEA:35331"/>
        <dbReference type="ChEBI" id="CHEBI:15377"/>
        <dbReference type="ChEBI" id="CHEBI:15378"/>
        <dbReference type="ChEBI" id="CHEBI:16845"/>
        <dbReference type="ChEBI" id="CHEBI:57783"/>
        <dbReference type="ChEBI" id="CHEBI:58349"/>
        <dbReference type="ChEBI" id="CHEBI:67139"/>
        <dbReference type="EC" id="1.17.1.8"/>
    </reaction>
</comment>
<comment type="pathway">
    <text evidence="1">Amino-acid biosynthesis; L-lysine biosynthesis via DAP pathway; (S)-tetrahydrodipicolinate from L-aspartate: step 4/4.</text>
</comment>
<comment type="subcellular location">
    <subcellularLocation>
        <location evidence="1">Cytoplasm</location>
    </subcellularLocation>
</comment>
<comment type="similarity">
    <text evidence="1">Belongs to the DapB family.</text>
</comment>
<comment type="caution">
    <text evidence="2">Was originally thought to be a dihydrodipicolinate reductase (DHDPR), catalyzing the conversion of dihydrodipicolinate to tetrahydrodipicolinate. However, it was shown in E.coli that the substrate of the enzymatic reaction is not dihydrodipicolinate (DHDP) but in fact (2S,4S)-4-hydroxy-2,3,4,5-tetrahydrodipicolinic acid (HTPA), the product released by the DapA-catalyzed reaction.</text>
</comment>
<proteinExistence type="inferred from homology"/>
<gene>
    <name evidence="1" type="primary">dapB</name>
    <name type="ordered locus">PFL_0829</name>
</gene>
<dbReference type="EC" id="1.17.1.8" evidence="1"/>
<dbReference type="EMBL" id="CP000076">
    <property type="protein sequence ID" value="AAY96229.1"/>
    <property type="molecule type" value="Genomic_DNA"/>
</dbReference>
<dbReference type="RefSeq" id="WP_011059190.1">
    <property type="nucleotide sequence ID" value="NC_004129.6"/>
</dbReference>
<dbReference type="SMR" id="Q4KIG9"/>
<dbReference type="STRING" id="220664.PFL_0829"/>
<dbReference type="KEGG" id="pfl:PFL_0829"/>
<dbReference type="PATRIC" id="fig|220664.5.peg.850"/>
<dbReference type="eggNOG" id="COG0289">
    <property type="taxonomic scope" value="Bacteria"/>
</dbReference>
<dbReference type="HOGENOM" id="CLU_047479_2_1_6"/>
<dbReference type="UniPathway" id="UPA00034">
    <property type="reaction ID" value="UER00018"/>
</dbReference>
<dbReference type="Proteomes" id="UP000008540">
    <property type="component" value="Chromosome"/>
</dbReference>
<dbReference type="GO" id="GO:0005829">
    <property type="term" value="C:cytosol"/>
    <property type="evidence" value="ECO:0007669"/>
    <property type="project" value="TreeGrafter"/>
</dbReference>
<dbReference type="GO" id="GO:0008839">
    <property type="term" value="F:4-hydroxy-tetrahydrodipicolinate reductase"/>
    <property type="evidence" value="ECO:0007669"/>
    <property type="project" value="UniProtKB-EC"/>
</dbReference>
<dbReference type="GO" id="GO:0051287">
    <property type="term" value="F:NAD binding"/>
    <property type="evidence" value="ECO:0007669"/>
    <property type="project" value="UniProtKB-UniRule"/>
</dbReference>
<dbReference type="GO" id="GO:0050661">
    <property type="term" value="F:NADP binding"/>
    <property type="evidence" value="ECO:0007669"/>
    <property type="project" value="UniProtKB-UniRule"/>
</dbReference>
<dbReference type="GO" id="GO:0016726">
    <property type="term" value="F:oxidoreductase activity, acting on CH or CH2 groups, NAD or NADP as acceptor"/>
    <property type="evidence" value="ECO:0007669"/>
    <property type="project" value="UniProtKB-UniRule"/>
</dbReference>
<dbReference type="GO" id="GO:0019877">
    <property type="term" value="P:diaminopimelate biosynthetic process"/>
    <property type="evidence" value="ECO:0007669"/>
    <property type="project" value="UniProtKB-UniRule"/>
</dbReference>
<dbReference type="GO" id="GO:0009089">
    <property type="term" value="P:lysine biosynthetic process via diaminopimelate"/>
    <property type="evidence" value="ECO:0007669"/>
    <property type="project" value="UniProtKB-UniRule"/>
</dbReference>
<dbReference type="CDD" id="cd02274">
    <property type="entry name" value="DHDPR_N"/>
    <property type="match status" value="1"/>
</dbReference>
<dbReference type="FunFam" id="3.30.360.10:FF:000004">
    <property type="entry name" value="4-hydroxy-tetrahydrodipicolinate reductase"/>
    <property type="match status" value="1"/>
</dbReference>
<dbReference type="FunFam" id="3.40.50.720:FF:000048">
    <property type="entry name" value="4-hydroxy-tetrahydrodipicolinate reductase"/>
    <property type="match status" value="1"/>
</dbReference>
<dbReference type="Gene3D" id="3.30.360.10">
    <property type="entry name" value="Dihydrodipicolinate Reductase, domain 2"/>
    <property type="match status" value="1"/>
</dbReference>
<dbReference type="Gene3D" id="3.40.50.720">
    <property type="entry name" value="NAD(P)-binding Rossmann-like Domain"/>
    <property type="match status" value="1"/>
</dbReference>
<dbReference type="HAMAP" id="MF_00102">
    <property type="entry name" value="DapB"/>
    <property type="match status" value="1"/>
</dbReference>
<dbReference type="InterPro" id="IPR022663">
    <property type="entry name" value="DapB_C"/>
</dbReference>
<dbReference type="InterPro" id="IPR000846">
    <property type="entry name" value="DapB_N"/>
</dbReference>
<dbReference type="InterPro" id="IPR022664">
    <property type="entry name" value="DapB_N_CS"/>
</dbReference>
<dbReference type="InterPro" id="IPR023940">
    <property type="entry name" value="DHDPR_bac"/>
</dbReference>
<dbReference type="InterPro" id="IPR036291">
    <property type="entry name" value="NAD(P)-bd_dom_sf"/>
</dbReference>
<dbReference type="NCBIfam" id="TIGR00036">
    <property type="entry name" value="dapB"/>
    <property type="match status" value="1"/>
</dbReference>
<dbReference type="PANTHER" id="PTHR20836:SF0">
    <property type="entry name" value="4-HYDROXY-TETRAHYDRODIPICOLINATE REDUCTASE 1, CHLOROPLASTIC-RELATED"/>
    <property type="match status" value="1"/>
</dbReference>
<dbReference type="PANTHER" id="PTHR20836">
    <property type="entry name" value="DIHYDRODIPICOLINATE REDUCTASE"/>
    <property type="match status" value="1"/>
</dbReference>
<dbReference type="Pfam" id="PF05173">
    <property type="entry name" value="DapB_C"/>
    <property type="match status" value="1"/>
</dbReference>
<dbReference type="Pfam" id="PF01113">
    <property type="entry name" value="DapB_N"/>
    <property type="match status" value="1"/>
</dbReference>
<dbReference type="PIRSF" id="PIRSF000161">
    <property type="entry name" value="DHPR"/>
    <property type="match status" value="1"/>
</dbReference>
<dbReference type="SUPFAM" id="SSF55347">
    <property type="entry name" value="Glyceraldehyde-3-phosphate dehydrogenase-like, C-terminal domain"/>
    <property type="match status" value="1"/>
</dbReference>
<dbReference type="SUPFAM" id="SSF51735">
    <property type="entry name" value="NAD(P)-binding Rossmann-fold domains"/>
    <property type="match status" value="1"/>
</dbReference>
<dbReference type="PROSITE" id="PS01298">
    <property type="entry name" value="DAPB"/>
    <property type="match status" value="1"/>
</dbReference>
<feature type="chain" id="PRO_0000228374" description="4-hydroxy-tetrahydrodipicolinate reductase">
    <location>
        <begin position="1"/>
        <end position="268"/>
    </location>
</feature>
<feature type="active site" description="Proton donor/acceptor" evidence="1">
    <location>
        <position position="156"/>
    </location>
</feature>
<feature type="active site" description="Proton donor" evidence="1">
    <location>
        <position position="160"/>
    </location>
</feature>
<feature type="binding site" evidence="1">
    <location>
        <begin position="8"/>
        <end position="13"/>
    </location>
    <ligand>
        <name>NAD(+)</name>
        <dbReference type="ChEBI" id="CHEBI:57540"/>
    </ligand>
</feature>
<feature type="binding site" evidence="1">
    <location>
        <position position="36"/>
    </location>
    <ligand>
        <name>NADP(+)</name>
        <dbReference type="ChEBI" id="CHEBI:58349"/>
    </ligand>
</feature>
<feature type="binding site" evidence="1">
    <location>
        <begin position="99"/>
        <end position="101"/>
    </location>
    <ligand>
        <name>NAD(+)</name>
        <dbReference type="ChEBI" id="CHEBI:57540"/>
    </ligand>
</feature>
<feature type="binding site" evidence="1">
    <location>
        <begin position="123"/>
        <end position="126"/>
    </location>
    <ligand>
        <name>NAD(+)</name>
        <dbReference type="ChEBI" id="CHEBI:57540"/>
    </ligand>
</feature>
<feature type="binding site" evidence="1">
    <location>
        <position position="157"/>
    </location>
    <ligand>
        <name>(S)-2,3,4,5-tetrahydrodipicolinate</name>
        <dbReference type="ChEBI" id="CHEBI:16845"/>
    </ligand>
</feature>
<feature type="binding site" evidence="1">
    <location>
        <begin position="166"/>
        <end position="167"/>
    </location>
    <ligand>
        <name>(S)-2,3,4,5-tetrahydrodipicolinate</name>
        <dbReference type="ChEBI" id="CHEBI:16845"/>
    </ligand>
</feature>
<keyword id="KW-0028">Amino-acid biosynthesis</keyword>
<keyword id="KW-0963">Cytoplasm</keyword>
<keyword id="KW-0220">Diaminopimelate biosynthesis</keyword>
<keyword id="KW-0457">Lysine biosynthesis</keyword>
<keyword id="KW-0520">NAD</keyword>
<keyword id="KW-0521">NADP</keyword>
<keyword id="KW-0560">Oxidoreductase</keyword>
<accession>Q4KIG9</accession>
<evidence type="ECO:0000255" key="1">
    <source>
        <dbReference type="HAMAP-Rule" id="MF_00102"/>
    </source>
</evidence>
<evidence type="ECO:0000305" key="2"/>
<sequence length="268" mass="28486">MRRIAVMGAAGRMGKTLVEAVQLRSPLSGLTAAIVRPGSSLVGADAGELASLGRLGVPMSDSLEKVVDEFDVLIDFTLPEVMLKNLAFCRKAGKAMVIGTTGLGAREKQLLAEAGKEIPIVFAANFSVGVNLSLKLLDMAARVLGDDADIEIIEAHHRHKIDAPSGTALRMGEVIASALGRDLQQVAVYGREGHTGARERETIGFATVRGGDVVGDHTVLFATEGERLEITHKASSRMTFAKGAVRAALWLDGREAGLYDMQDVLDLR</sequence>